<accession>Q32AV4</accession>
<evidence type="ECO:0000255" key="1">
    <source>
        <dbReference type="HAMAP-Rule" id="MF_01248"/>
    </source>
</evidence>
<evidence type="ECO:0000256" key="2">
    <source>
        <dbReference type="SAM" id="MobiDB-lite"/>
    </source>
</evidence>
<organism>
    <name type="scientific">Shigella dysenteriae serotype 1 (strain Sd197)</name>
    <dbReference type="NCBI Taxonomy" id="300267"/>
    <lineage>
        <taxon>Bacteria</taxon>
        <taxon>Pseudomonadati</taxon>
        <taxon>Pseudomonadota</taxon>
        <taxon>Gammaproteobacteria</taxon>
        <taxon>Enterobacterales</taxon>
        <taxon>Enterobacteriaceae</taxon>
        <taxon>Shigella</taxon>
    </lineage>
</organism>
<proteinExistence type="inferred from homology"/>
<sequence>MTQLAIGKPAPLGAHYDGQGVNFTLFSAHAERVELCVFDANGHEHRYDLPGHSGDIWHGYLPDARPGLRYGYRVHGPWQPAEGHRFNPAKLLIDPCARQIDGEFKDNPLLYAGHNEPDYRDNAAIAPKCVVVVDHYDWEDDAPPRTPWGSTIIYEAHVKGLTYLHPEIPVEIRGTYKALGHPVMINYLKQLGITALELLPVAQFASEPRLQRMGLSNYWGYNPVAMFALHPAYACSPETALHEFRDAIKALHKAGIEVILDIVLNHSAELDLDGPLFSLRGIDNRSYYWIREDGDYHNWTGCGNTLNLSHPAVVDYASACLRYWVETCHVDGFRFDLAAVMGRTPEFRQDAPLFTAIQNCPVLSQVKLIAEPWDIAPGGYQVGNFPPLFAEWNDHFRDAARRFWLHYDLPLGAFAGRFAASSDVFKRNGRLPSAAINLVTAHDGFTLRDCVCFNHKHNEANGEENRDGTNNNYSNNHGKEGLGGTLDLVERRRDSIHALLTTLLLSQGTPMLLAGDEHGHSQHGNNNAYCQDNQLTWLDWSQASSGLTAFTAALIHLRKRIPALVENRWWEEGDGNVRWLNRYAQPLSTDEWQNGPKQLQILLSDRFLIAINATLEVTEIVLPAGEWHAIPPFAGEDNPVITAVWQGPAHGLCVFQR</sequence>
<protein>
    <recommendedName>
        <fullName evidence="1">Glycogen debranching enzyme</fullName>
        <ecNumber evidence="1">3.2.1.196</ecNumber>
    </recommendedName>
    <alternativeName>
        <fullName evidence="1">Limit dextrin alpha-1,6-maltotetraose-hydrolase</fullName>
    </alternativeName>
</protein>
<reference key="1">
    <citation type="journal article" date="2005" name="Nucleic Acids Res.">
        <title>Genome dynamics and diversity of Shigella species, the etiologic agents of bacillary dysentery.</title>
        <authorList>
            <person name="Yang F."/>
            <person name="Yang J."/>
            <person name="Zhang X."/>
            <person name="Chen L."/>
            <person name="Jiang Y."/>
            <person name="Yan Y."/>
            <person name="Tang X."/>
            <person name="Wang J."/>
            <person name="Xiong Z."/>
            <person name="Dong J."/>
            <person name="Xue Y."/>
            <person name="Zhu Y."/>
            <person name="Xu X."/>
            <person name="Sun L."/>
            <person name="Chen S."/>
            <person name="Nie H."/>
            <person name="Peng J."/>
            <person name="Xu J."/>
            <person name="Wang Y."/>
            <person name="Yuan Z."/>
            <person name="Wen Y."/>
            <person name="Yao Z."/>
            <person name="Shen Y."/>
            <person name="Qiang B."/>
            <person name="Hou Y."/>
            <person name="Yu J."/>
            <person name="Jin Q."/>
        </authorList>
    </citation>
    <scope>NUCLEOTIDE SEQUENCE [LARGE SCALE GENOMIC DNA]</scope>
    <source>
        <strain>Sd197</strain>
    </source>
</reference>
<comment type="function">
    <text evidence="1">Removes maltotriose and maltotetraose chains that are attached by 1,6-alpha-linkage to the limit dextrin main chain, generating a debranched limit dextrin.</text>
</comment>
<comment type="catalytic activity">
    <reaction evidence="1">
        <text>Hydrolysis of (1-&gt;6)-alpha-D-glucosidic linkages to branches with degrees of polymerization of three or four glucose residues in limit dextrin.</text>
        <dbReference type="EC" id="3.2.1.196"/>
    </reaction>
</comment>
<comment type="pathway">
    <text evidence="1">Glycan degradation; glycogen degradation.</text>
</comment>
<comment type="similarity">
    <text evidence="1">Belongs to the glycosyl hydrolase 13 family.</text>
</comment>
<name>GLGX_SHIDS</name>
<keyword id="KW-0119">Carbohydrate metabolism</keyword>
<keyword id="KW-0321">Glycogen metabolism</keyword>
<keyword id="KW-0326">Glycosidase</keyword>
<keyword id="KW-0378">Hydrolase</keyword>
<keyword id="KW-1185">Reference proteome</keyword>
<gene>
    <name evidence="1" type="primary">glgX</name>
    <name type="ordered locus">SDY_3577</name>
</gene>
<dbReference type="EC" id="3.2.1.196" evidence="1"/>
<dbReference type="EMBL" id="CP000034">
    <property type="protein sequence ID" value="ABB63551.1"/>
    <property type="molecule type" value="Genomic_DNA"/>
</dbReference>
<dbReference type="RefSeq" id="WP_000192515.1">
    <property type="nucleotide sequence ID" value="NC_007606.1"/>
</dbReference>
<dbReference type="RefSeq" id="YP_405042.1">
    <property type="nucleotide sequence ID" value="NC_007606.1"/>
</dbReference>
<dbReference type="SMR" id="Q32AV4"/>
<dbReference type="STRING" id="300267.SDY_3577"/>
<dbReference type="CAZy" id="CBM48">
    <property type="family name" value="Carbohydrate-Binding Module Family 48"/>
</dbReference>
<dbReference type="CAZy" id="GH13">
    <property type="family name" value="Glycoside Hydrolase Family 13"/>
</dbReference>
<dbReference type="EnsemblBacteria" id="ABB63551">
    <property type="protein sequence ID" value="ABB63551"/>
    <property type="gene ID" value="SDY_3577"/>
</dbReference>
<dbReference type="KEGG" id="sdy:SDY_3577"/>
<dbReference type="PATRIC" id="fig|300267.13.peg.4248"/>
<dbReference type="HOGENOM" id="CLU_011725_1_1_6"/>
<dbReference type="UniPathway" id="UPA00165"/>
<dbReference type="Proteomes" id="UP000002716">
    <property type="component" value="Chromosome"/>
</dbReference>
<dbReference type="GO" id="GO:0004133">
    <property type="term" value="F:glycogen debranching enzyme activity"/>
    <property type="evidence" value="ECO:0007669"/>
    <property type="project" value="UniProtKB-UniRule"/>
</dbReference>
<dbReference type="GO" id="GO:0004553">
    <property type="term" value="F:hydrolase activity, hydrolyzing O-glycosyl compounds"/>
    <property type="evidence" value="ECO:0007669"/>
    <property type="project" value="InterPro"/>
</dbReference>
<dbReference type="GO" id="GO:0005980">
    <property type="term" value="P:glycogen catabolic process"/>
    <property type="evidence" value="ECO:0007669"/>
    <property type="project" value="UniProtKB-UniRule"/>
</dbReference>
<dbReference type="CDD" id="cd11326">
    <property type="entry name" value="AmyAc_Glg_debranch"/>
    <property type="match status" value="1"/>
</dbReference>
<dbReference type="CDD" id="cd02856">
    <property type="entry name" value="E_set_GDE_Isoamylase_N"/>
    <property type="match status" value="1"/>
</dbReference>
<dbReference type="FunFam" id="2.60.40.10:FF:000468">
    <property type="entry name" value="Glycogen debranching enzyme"/>
    <property type="match status" value="1"/>
</dbReference>
<dbReference type="FunFam" id="3.20.20.80:FF:000031">
    <property type="entry name" value="Glycogen debranching enzyme"/>
    <property type="match status" value="1"/>
</dbReference>
<dbReference type="Gene3D" id="3.20.20.80">
    <property type="entry name" value="Glycosidases"/>
    <property type="match status" value="1"/>
</dbReference>
<dbReference type="Gene3D" id="2.60.40.1180">
    <property type="entry name" value="Golgi alpha-mannosidase II"/>
    <property type="match status" value="1"/>
</dbReference>
<dbReference type="Gene3D" id="2.60.40.10">
    <property type="entry name" value="Immunoglobulins"/>
    <property type="match status" value="1"/>
</dbReference>
<dbReference type="HAMAP" id="MF_01248">
    <property type="entry name" value="GlgX"/>
    <property type="match status" value="1"/>
</dbReference>
<dbReference type="InterPro" id="IPR040784">
    <property type="entry name" value="GlgX_C"/>
</dbReference>
<dbReference type="InterPro" id="IPR044505">
    <property type="entry name" value="GlgX_Isoamylase_N_E_set"/>
</dbReference>
<dbReference type="InterPro" id="IPR006047">
    <property type="entry name" value="Glyco_hydro_13_cat_dom"/>
</dbReference>
<dbReference type="InterPro" id="IPR004193">
    <property type="entry name" value="Glyco_hydro_13_N"/>
</dbReference>
<dbReference type="InterPro" id="IPR013780">
    <property type="entry name" value="Glyco_hydro_b"/>
</dbReference>
<dbReference type="InterPro" id="IPR022844">
    <property type="entry name" value="Glycogen_debranch_bac"/>
</dbReference>
<dbReference type="InterPro" id="IPR011837">
    <property type="entry name" value="Glycogen_debranch_GlgX"/>
</dbReference>
<dbReference type="InterPro" id="IPR017853">
    <property type="entry name" value="Glycoside_hydrolase_SF"/>
</dbReference>
<dbReference type="InterPro" id="IPR013783">
    <property type="entry name" value="Ig-like_fold"/>
</dbReference>
<dbReference type="InterPro" id="IPR014756">
    <property type="entry name" value="Ig_E-set"/>
</dbReference>
<dbReference type="NCBIfam" id="TIGR02100">
    <property type="entry name" value="glgX_debranch"/>
    <property type="match status" value="1"/>
</dbReference>
<dbReference type="NCBIfam" id="NF002983">
    <property type="entry name" value="PRK03705.1"/>
    <property type="match status" value="1"/>
</dbReference>
<dbReference type="PANTHER" id="PTHR43002">
    <property type="entry name" value="GLYCOGEN DEBRANCHING ENZYME"/>
    <property type="match status" value="1"/>
</dbReference>
<dbReference type="Pfam" id="PF00128">
    <property type="entry name" value="Alpha-amylase"/>
    <property type="match status" value="1"/>
</dbReference>
<dbReference type="Pfam" id="PF02922">
    <property type="entry name" value="CBM_48"/>
    <property type="match status" value="1"/>
</dbReference>
<dbReference type="Pfam" id="PF18390">
    <property type="entry name" value="GlgX_C"/>
    <property type="match status" value="1"/>
</dbReference>
<dbReference type="SMART" id="SM00642">
    <property type="entry name" value="Aamy"/>
    <property type="match status" value="1"/>
</dbReference>
<dbReference type="SUPFAM" id="SSF51445">
    <property type="entry name" value="(Trans)glycosidases"/>
    <property type="match status" value="1"/>
</dbReference>
<dbReference type="SUPFAM" id="SSF81296">
    <property type="entry name" value="E set domains"/>
    <property type="match status" value="1"/>
</dbReference>
<feature type="chain" id="PRO_1000067106" description="Glycogen debranching enzyme">
    <location>
        <begin position="1"/>
        <end position="657"/>
    </location>
</feature>
<feature type="region of interest" description="Disordered" evidence="2">
    <location>
        <begin position="460"/>
        <end position="479"/>
    </location>
</feature>
<feature type="active site" description="Nucleophile" evidence="1">
    <location>
        <position position="336"/>
    </location>
</feature>
<feature type="active site" description="Proton donor" evidence="1">
    <location>
        <position position="371"/>
    </location>
</feature>
<feature type="site" description="Transition state stabilizer" evidence="1">
    <location>
        <position position="443"/>
    </location>
</feature>